<organism>
    <name type="scientific">Wolinella succinogenes (strain ATCC 29543 / DSM 1740 / CCUG 13145 / JCM 31913 / LMG 7466 / NCTC 11488 / FDC 602W)</name>
    <name type="common">Vibrio succinogenes</name>
    <dbReference type="NCBI Taxonomy" id="273121"/>
    <lineage>
        <taxon>Bacteria</taxon>
        <taxon>Pseudomonadati</taxon>
        <taxon>Campylobacterota</taxon>
        <taxon>Epsilonproteobacteria</taxon>
        <taxon>Campylobacterales</taxon>
        <taxon>Helicobacteraceae</taxon>
        <taxon>Wolinella</taxon>
    </lineage>
</organism>
<dbReference type="EC" id="1.1.1.267" evidence="1"/>
<dbReference type="EMBL" id="BX571659">
    <property type="protein sequence ID" value="CAE09925.1"/>
    <property type="molecule type" value="Genomic_DNA"/>
</dbReference>
<dbReference type="RefSeq" id="WP_011138722.1">
    <property type="nucleotide sequence ID" value="NC_005090.1"/>
</dbReference>
<dbReference type="SMR" id="Q7M9M7"/>
<dbReference type="STRING" id="273121.WS0812"/>
<dbReference type="KEGG" id="wsu:WS0812"/>
<dbReference type="eggNOG" id="COG0743">
    <property type="taxonomic scope" value="Bacteria"/>
</dbReference>
<dbReference type="HOGENOM" id="CLU_035714_4_0_7"/>
<dbReference type="UniPathway" id="UPA00056">
    <property type="reaction ID" value="UER00092"/>
</dbReference>
<dbReference type="Proteomes" id="UP000000422">
    <property type="component" value="Chromosome"/>
</dbReference>
<dbReference type="GO" id="GO:0030604">
    <property type="term" value="F:1-deoxy-D-xylulose-5-phosphate reductoisomerase activity"/>
    <property type="evidence" value="ECO:0007669"/>
    <property type="project" value="UniProtKB-UniRule"/>
</dbReference>
<dbReference type="GO" id="GO:0030145">
    <property type="term" value="F:manganese ion binding"/>
    <property type="evidence" value="ECO:0007669"/>
    <property type="project" value="TreeGrafter"/>
</dbReference>
<dbReference type="GO" id="GO:0070402">
    <property type="term" value="F:NADPH binding"/>
    <property type="evidence" value="ECO:0007669"/>
    <property type="project" value="InterPro"/>
</dbReference>
<dbReference type="GO" id="GO:0051484">
    <property type="term" value="P:isopentenyl diphosphate biosynthetic process, methylerythritol 4-phosphate pathway involved in terpenoid biosynthetic process"/>
    <property type="evidence" value="ECO:0007669"/>
    <property type="project" value="TreeGrafter"/>
</dbReference>
<dbReference type="Gene3D" id="1.10.1740.10">
    <property type="match status" value="1"/>
</dbReference>
<dbReference type="Gene3D" id="3.40.50.720">
    <property type="entry name" value="NAD(P)-binding Rossmann-like Domain"/>
    <property type="match status" value="1"/>
</dbReference>
<dbReference type="HAMAP" id="MF_00183">
    <property type="entry name" value="DXP_reductoisom"/>
    <property type="match status" value="1"/>
</dbReference>
<dbReference type="InterPro" id="IPR003821">
    <property type="entry name" value="DXP_reductoisomerase"/>
</dbReference>
<dbReference type="InterPro" id="IPR013644">
    <property type="entry name" value="DXP_reductoisomerase_C"/>
</dbReference>
<dbReference type="InterPro" id="IPR013512">
    <property type="entry name" value="DXP_reductoisomerase_N"/>
</dbReference>
<dbReference type="InterPro" id="IPR026877">
    <property type="entry name" value="DXPR_C"/>
</dbReference>
<dbReference type="InterPro" id="IPR036169">
    <property type="entry name" value="DXPR_C_sf"/>
</dbReference>
<dbReference type="InterPro" id="IPR036291">
    <property type="entry name" value="NAD(P)-bd_dom_sf"/>
</dbReference>
<dbReference type="NCBIfam" id="TIGR00243">
    <property type="entry name" value="Dxr"/>
    <property type="match status" value="1"/>
</dbReference>
<dbReference type="PANTHER" id="PTHR30525">
    <property type="entry name" value="1-DEOXY-D-XYLULOSE 5-PHOSPHATE REDUCTOISOMERASE"/>
    <property type="match status" value="1"/>
</dbReference>
<dbReference type="PANTHER" id="PTHR30525:SF0">
    <property type="entry name" value="1-DEOXY-D-XYLULOSE 5-PHOSPHATE REDUCTOISOMERASE, CHLOROPLASTIC"/>
    <property type="match status" value="1"/>
</dbReference>
<dbReference type="Pfam" id="PF08436">
    <property type="entry name" value="DXP_redisom_C"/>
    <property type="match status" value="1"/>
</dbReference>
<dbReference type="Pfam" id="PF02670">
    <property type="entry name" value="DXP_reductoisom"/>
    <property type="match status" value="1"/>
</dbReference>
<dbReference type="Pfam" id="PF13288">
    <property type="entry name" value="DXPR_C"/>
    <property type="match status" value="1"/>
</dbReference>
<dbReference type="PIRSF" id="PIRSF006205">
    <property type="entry name" value="Dxp_reductismrs"/>
    <property type="match status" value="1"/>
</dbReference>
<dbReference type="SUPFAM" id="SSF69055">
    <property type="entry name" value="1-deoxy-D-xylulose-5-phosphate reductoisomerase, C-terminal domain"/>
    <property type="match status" value="1"/>
</dbReference>
<dbReference type="SUPFAM" id="SSF55347">
    <property type="entry name" value="Glyceraldehyde-3-phosphate dehydrogenase-like, C-terminal domain"/>
    <property type="match status" value="1"/>
</dbReference>
<dbReference type="SUPFAM" id="SSF51735">
    <property type="entry name" value="NAD(P)-binding Rossmann-fold domains"/>
    <property type="match status" value="1"/>
</dbReference>
<sequence>MILLGSTGSIGQNALSLARDFRLPVEVLVAGHNLSLLNAQIAEFQPKIIVIADSSRASELSLPKDSKLLFGEEGIIESLHLAQSSFVLNALVGFLGLRPTLESLRLGKTLALANKESLVAGGSFVDASKIIPVDSEHFSLWFLKSDKPFSRLFITASGGAFRDTPLEEIPLQKAQAALRHPNWSMGRKITVDSATMVNKLFEILEARWLFNTKSVDALIERNSLVHALIGYPDGSFSAHIAQADMRLPLAYAMLGKLDQPLGPPLELERLAALSFEPINPSRYPLWNLKEKLLTHPWLGITLNAANEVAVEKFLEGKILFGEIPRYIERSLERFSMIPASIEELFALDSEVRQFAHKL</sequence>
<accession>Q7M9M7</accession>
<comment type="function">
    <text evidence="1">Catalyzes the NADPH-dependent rearrangement and reduction of 1-deoxy-D-xylulose-5-phosphate (DXP) to 2-C-methyl-D-erythritol 4-phosphate (MEP).</text>
</comment>
<comment type="catalytic activity">
    <reaction evidence="1">
        <text>2-C-methyl-D-erythritol 4-phosphate + NADP(+) = 1-deoxy-D-xylulose 5-phosphate + NADPH + H(+)</text>
        <dbReference type="Rhea" id="RHEA:13717"/>
        <dbReference type="ChEBI" id="CHEBI:15378"/>
        <dbReference type="ChEBI" id="CHEBI:57783"/>
        <dbReference type="ChEBI" id="CHEBI:57792"/>
        <dbReference type="ChEBI" id="CHEBI:58262"/>
        <dbReference type="ChEBI" id="CHEBI:58349"/>
        <dbReference type="EC" id="1.1.1.267"/>
    </reaction>
    <physiologicalReaction direction="right-to-left" evidence="1">
        <dbReference type="Rhea" id="RHEA:13719"/>
    </physiologicalReaction>
</comment>
<comment type="cofactor">
    <cofactor evidence="1">
        <name>Mg(2+)</name>
        <dbReference type="ChEBI" id="CHEBI:18420"/>
    </cofactor>
    <cofactor evidence="1">
        <name>Mn(2+)</name>
        <dbReference type="ChEBI" id="CHEBI:29035"/>
    </cofactor>
</comment>
<comment type="pathway">
    <text evidence="1">Isoprenoid biosynthesis; isopentenyl diphosphate biosynthesis via DXP pathway; isopentenyl diphosphate from 1-deoxy-D-xylulose 5-phosphate: step 1/6.</text>
</comment>
<comment type="similarity">
    <text evidence="1">Belongs to the DXR family.</text>
</comment>
<gene>
    <name evidence="1" type="primary">dxr</name>
    <name type="ordered locus">WS0812</name>
</gene>
<name>DXR_WOLSU</name>
<proteinExistence type="inferred from homology"/>
<protein>
    <recommendedName>
        <fullName evidence="1">1-deoxy-D-xylulose 5-phosphate reductoisomerase</fullName>
        <shortName evidence="1">DXP reductoisomerase</shortName>
        <ecNumber evidence="1">1.1.1.267</ecNumber>
    </recommendedName>
    <alternativeName>
        <fullName evidence="1">1-deoxyxylulose-5-phosphate reductoisomerase</fullName>
    </alternativeName>
    <alternativeName>
        <fullName evidence="1">2-C-methyl-D-erythritol 4-phosphate synthase</fullName>
    </alternativeName>
</protein>
<reference key="1">
    <citation type="journal article" date="2003" name="Proc. Natl. Acad. Sci. U.S.A.">
        <title>Complete genome sequence and analysis of Wolinella succinogenes.</title>
        <authorList>
            <person name="Baar C."/>
            <person name="Eppinger M."/>
            <person name="Raddatz G."/>
            <person name="Simon J."/>
            <person name="Lanz C."/>
            <person name="Klimmek O."/>
            <person name="Nandakumar R."/>
            <person name="Gross R."/>
            <person name="Rosinus A."/>
            <person name="Keller H."/>
            <person name="Jagtap P."/>
            <person name="Linke B."/>
            <person name="Meyer F."/>
            <person name="Lederer H."/>
            <person name="Schuster S.C."/>
        </authorList>
    </citation>
    <scope>NUCLEOTIDE SEQUENCE [LARGE SCALE GENOMIC DNA]</scope>
    <source>
        <strain>ATCC 29543 / DSM 1740 / CCUG 13145 / JCM 31913 / LMG 7466 / NCTC 11488 / FDC 602W</strain>
    </source>
</reference>
<keyword id="KW-0414">Isoprene biosynthesis</keyword>
<keyword id="KW-0464">Manganese</keyword>
<keyword id="KW-0479">Metal-binding</keyword>
<keyword id="KW-0521">NADP</keyword>
<keyword id="KW-0560">Oxidoreductase</keyword>
<keyword id="KW-1185">Reference proteome</keyword>
<evidence type="ECO:0000255" key="1">
    <source>
        <dbReference type="HAMAP-Rule" id="MF_00183"/>
    </source>
</evidence>
<feature type="chain" id="PRO_0000163738" description="1-deoxy-D-xylulose 5-phosphate reductoisomerase">
    <location>
        <begin position="1"/>
        <end position="358"/>
    </location>
</feature>
<feature type="binding site" evidence="1">
    <location>
        <position position="7"/>
    </location>
    <ligand>
        <name>NADPH</name>
        <dbReference type="ChEBI" id="CHEBI:57783"/>
    </ligand>
</feature>
<feature type="binding site" evidence="1">
    <location>
        <position position="8"/>
    </location>
    <ligand>
        <name>NADPH</name>
        <dbReference type="ChEBI" id="CHEBI:57783"/>
    </ligand>
</feature>
<feature type="binding site" evidence="1">
    <location>
        <position position="9"/>
    </location>
    <ligand>
        <name>NADPH</name>
        <dbReference type="ChEBI" id="CHEBI:57783"/>
    </ligand>
</feature>
<feature type="binding site" evidence="1">
    <location>
        <position position="10"/>
    </location>
    <ligand>
        <name>NADPH</name>
        <dbReference type="ChEBI" id="CHEBI:57783"/>
    </ligand>
</feature>
<feature type="binding site" evidence="1">
    <location>
        <position position="31"/>
    </location>
    <ligand>
        <name>NADPH</name>
        <dbReference type="ChEBI" id="CHEBI:57783"/>
    </ligand>
</feature>
<feature type="binding site" evidence="1">
    <location>
        <position position="33"/>
    </location>
    <ligand>
        <name>NADPH</name>
        <dbReference type="ChEBI" id="CHEBI:57783"/>
    </ligand>
</feature>
<feature type="binding site" evidence="1">
    <location>
        <position position="114"/>
    </location>
    <ligand>
        <name>NADPH</name>
        <dbReference type="ChEBI" id="CHEBI:57783"/>
    </ligand>
</feature>
<feature type="binding site" evidence="1">
    <location>
        <position position="115"/>
    </location>
    <ligand>
        <name>1-deoxy-D-xylulose 5-phosphate</name>
        <dbReference type="ChEBI" id="CHEBI:57792"/>
    </ligand>
</feature>
<feature type="binding site" evidence="1">
    <location>
        <position position="116"/>
    </location>
    <ligand>
        <name>NADPH</name>
        <dbReference type="ChEBI" id="CHEBI:57783"/>
    </ligand>
</feature>
<feature type="binding site" evidence="1">
    <location>
        <position position="134"/>
    </location>
    <ligand>
        <name>Mn(2+)</name>
        <dbReference type="ChEBI" id="CHEBI:29035"/>
    </ligand>
</feature>
<feature type="binding site" evidence="1">
    <location>
        <position position="135"/>
    </location>
    <ligand>
        <name>1-deoxy-D-xylulose 5-phosphate</name>
        <dbReference type="ChEBI" id="CHEBI:57792"/>
    </ligand>
</feature>
<feature type="binding site" evidence="1">
    <location>
        <position position="136"/>
    </location>
    <ligand>
        <name>1-deoxy-D-xylulose 5-phosphate</name>
        <dbReference type="ChEBI" id="CHEBI:57792"/>
    </ligand>
</feature>
<feature type="binding site" evidence="1">
    <location>
        <position position="136"/>
    </location>
    <ligand>
        <name>Mn(2+)</name>
        <dbReference type="ChEBI" id="CHEBI:29035"/>
    </ligand>
</feature>
<feature type="binding site" evidence="1">
    <location>
        <position position="157"/>
    </location>
    <ligand>
        <name>1-deoxy-D-xylulose 5-phosphate</name>
        <dbReference type="ChEBI" id="CHEBI:57792"/>
    </ligand>
</feature>
<feature type="binding site" evidence="1">
    <location>
        <position position="180"/>
    </location>
    <ligand>
        <name>1-deoxy-D-xylulose 5-phosphate</name>
        <dbReference type="ChEBI" id="CHEBI:57792"/>
    </ligand>
</feature>
<feature type="binding site" evidence="1">
    <location>
        <position position="186"/>
    </location>
    <ligand>
        <name>NADPH</name>
        <dbReference type="ChEBI" id="CHEBI:57783"/>
    </ligand>
</feature>
<feature type="binding site" evidence="1">
    <location>
        <position position="193"/>
    </location>
    <ligand>
        <name>1-deoxy-D-xylulose 5-phosphate</name>
        <dbReference type="ChEBI" id="CHEBI:57792"/>
    </ligand>
</feature>
<feature type="binding site" evidence="1">
    <location>
        <position position="198"/>
    </location>
    <ligand>
        <name>1-deoxy-D-xylulose 5-phosphate</name>
        <dbReference type="ChEBI" id="CHEBI:57792"/>
    </ligand>
</feature>
<feature type="binding site" evidence="1">
    <location>
        <position position="199"/>
    </location>
    <ligand>
        <name>1-deoxy-D-xylulose 5-phosphate</name>
        <dbReference type="ChEBI" id="CHEBI:57792"/>
    </ligand>
</feature>
<feature type="binding site" evidence="1">
    <location>
        <position position="202"/>
    </location>
    <ligand>
        <name>1-deoxy-D-xylulose 5-phosphate</name>
        <dbReference type="ChEBI" id="CHEBI:57792"/>
    </ligand>
</feature>
<feature type="binding site" evidence="1">
    <location>
        <position position="202"/>
    </location>
    <ligand>
        <name>Mn(2+)</name>
        <dbReference type="ChEBI" id="CHEBI:29035"/>
    </ligand>
</feature>